<sequence>MDYYRKYAAVILAILSLFLQILHSFPDGEFTMQGCPECKLKENKYFSKPDAPIYQCMGCCFSRAYPTPARSKKTMLVPKNITSEATCCVAKAFTKATVMGNVRVENHTECHCSTCYYHKS</sequence>
<comment type="function">
    <text evidence="1">Shared alpha chain of the active heterodimeric glycoprotein hormones thyrotropin/thyroid stimulating hormone/TSH, lutropin/luteinizing hormone/LH and follitropin/follicle stimulating hormone/FSH. These hormones bind specific receptors on target cells that in turn activate downstream signaling pathways.</text>
</comment>
<comment type="subunit">
    <text evidence="1">Heterodimer. The active hormones thyrotropin, lutropin and follitropin are heterodimers composed of CGA, a common alpha chain described here and a unique beta chain which confers their biological specificity to the hormones: TSHB for thyrotropin, LHB for lutropin and FSHB for follitropin.</text>
</comment>
<comment type="subcellular location">
    <subcellularLocation>
        <location evidence="1">Secreted</location>
    </subcellularLocation>
</comment>
<comment type="similarity">
    <text evidence="3">Belongs to the glycoprotein hormones subunit alpha family.</text>
</comment>
<keyword id="KW-0903">Direct protein sequencing</keyword>
<keyword id="KW-1015">Disulfide bond</keyword>
<keyword id="KW-0325">Glycoprotein</keyword>
<keyword id="KW-0372">Hormone</keyword>
<keyword id="KW-1185">Reference proteome</keyword>
<keyword id="KW-0964">Secreted</keyword>
<keyword id="KW-0732">Signal</keyword>
<organism>
    <name type="scientific">Bos taurus</name>
    <name type="common">Bovine</name>
    <dbReference type="NCBI Taxonomy" id="9913"/>
    <lineage>
        <taxon>Eukaryota</taxon>
        <taxon>Metazoa</taxon>
        <taxon>Chordata</taxon>
        <taxon>Craniata</taxon>
        <taxon>Vertebrata</taxon>
        <taxon>Euteleostomi</taxon>
        <taxon>Mammalia</taxon>
        <taxon>Eutheria</taxon>
        <taxon>Laurasiatheria</taxon>
        <taxon>Artiodactyla</taxon>
        <taxon>Ruminantia</taxon>
        <taxon>Pecora</taxon>
        <taxon>Bovidae</taxon>
        <taxon>Bovinae</taxon>
        <taxon>Bos</taxon>
    </lineage>
</organism>
<name>GLHA_BOVIN</name>
<accession>P01217</accession>
<evidence type="ECO:0000250" key="1">
    <source>
        <dbReference type="UniProtKB" id="P01215"/>
    </source>
</evidence>
<evidence type="ECO:0000269" key="2">
    <source>
    </source>
</evidence>
<evidence type="ECO:0000305" key="3"/>
<protein>
    <recommendedName>
        <fullName>Glycoprotein hormones alpha chain</fullName>
    </recommendedName>
    <alternativeName>
        <fullName>Anterior pituitary glycoprotein hormones common subunit alpha</fullName>
    </alternativeName>
    <alternativeName>
        <fullName>Follicle-stimulating hormone alpha chain</fullName>
        <shortName>FSH-alpha</shortName>
    </alternativeName>
    <alternativeName>
        <fullName>Follitropin alpha chain</fullName>
    </alternativeName>
    <alternativeName>
        <fullName>Luteinizing hormone alpha chain</fullName>
        <shortName>LSH-alpha</shortName>
    </alternativeName>
    <alternativeName>
        <fullName>Lutropin alpha chain</fullName>
    </alternativeName>
    <alternativeName>
        <fullName>Thyroid-stimulating hormone alpha chain</fullName>
        <shortName>TSH-alpha</shortName>
    </alternativeName>
    <alternativeName>
        <fullName>Thyrotropin alpha chain</fullName>
    </alternativeName>
</protein>
<reference key="1">
    <citation type="journal article" date="1983" name="Nucleic Acids Res.">
        <title>Characterization and nucleotide sequence of the gene for the common alpha subunit of the bovine pituitary glycoprotein hormones.</title>
        <authorList>
            <person name="Goodwin R.G."/>
            <person name="Moncman C.L."/>
            <person name="Rottman F.M."/>
            <person name="Nilson J.H."/>
        </authorList>
    </citation>
    <scope>NUCLEOTIDE SEQUENCE [GENOMIC DNA]</scope>
</reference>
<reference key="2">
    <citation type="journal article" date="1983" name="Biochemistry">
        <title>Nucleotide sequence of cloned complementary deoxyribonucleic acid for the alpha subunit of bovine pituitary glycoprotein hormones.</title>
        <authorList>
            <person name="Erwin C."/>
            <person name="Croyle M.L."/>
            <person name="Donelson J."/>
            <person name="Maurer R."/>
        </authorList>
    </citation>
    <scope>NUCLEOTIDE SEQUENCE [GENOMIC DNA]</scope>
</reference>
<reference key="3">
    <citation type="journal article" date="1983" name="J. Biol. Chem.">
        <title>Nucleotide sequence of a cDNA for the common alpha subunit of the bovine pituitary glycoprotein hormones. Conservation of nucleotides in the 3'-untranslated region of bovine and human pre-alpha subunit mRNAs.</title>
        <authorList>
            <person name="Nilson J.H."/>
            <person name="Thomason A.R."/>
            <person name="Cserbak M.T."/>
            <person name="Moncman C.L."/>
            <person name="Woychik R.P."/>
        </authorList>
    </citation>
    <scope>NUCLEOTIDE SEQUENCE [MRNA] OF 8-120</scope>
</reference>
<reference key="4">
    <citation type="journal article" date="1971" name="J. Biol. Chem.">
        <title>The primary structure of bovine thyrotropin. II. The amino acid sequences of the reduced, S-carboxymethyl alpha and beta chains.</title>
        <authorList>
            <person name="Liao T.-H."/>
            <person name="Pierce J.G."/>
        </authorList>
    </citation>
    <scope>PROTEIN SEQUENCE OF 25-120</scope>
</reference>
<reference key="5">
    <citation type="journal article" date="1971" name="J. Biol. Chem.">
        <title>Comparisons between the alpha chain of bovine thyrotropin and the CI chain of luteinizing hormone. Compositions of tryptic peptides, cyanogen bromide fragments, and carbohydrate moieties.</title>
        <authorList>
            <person name="Pierce J.G."/>
            <person name="Liao T.-H."/>
            <person name="Carlsen R.B."/>
            <person name="Reimo T."/>
        </authorList>
    </citation>
    <scope>PRELIMINARY PARTIAL PROTEIN SEQUENCE</scope>
</reference>
<reference key="6">
    <citation type="journal article" date="1971" name="Eur. J. Biochem.">
        <title>Bovine luteinizing hormone. Study of the primary structure around the carbohydrate attachment sites of the luteinizing hormone alpha-subunit.</title>
        <authorList>
            <person name="Maghuin-Rogister G."/>
            <person name="Hennen G.P."/>
        </authorList>
    </citation>
    <scope>PROTEIN SEQUENCE OF 80-91 AND 100-120</scope>
</reference>
<reference key="7">
    <citation type="journal article" date="1974" name="J. Biol. Chem.">
        <title>Studies on the disulfide bonds of glycoprotein hormones. Locations in the alpha chain based on partial reductions and formation of 14C-labeled S-carboxymethyl derivatives.</title>
        <authorList>
            <person name="Cornell J.S."/>
            <person name="Pierce J.G."/>
        </authorList>
    </citation>
    <scope>PRELIMINARY ASSIGNMENT OF DISULFIDE BONDS</scope>
</reference>
<feature type="signal peptide" evidence="2">
    <location>
        <begin position="1"/>
        <end position="24"/>
    </location>
</feature>
<feature type="chain" id="PRO_0000011633" description="Glycoprotein hormones alpha chain">
    <location>
        <begin position="25"/>
        <end position="120"/>
    </location>
</feature>
<feature type="glycosylation site" id="CAR_000035" description="O-linked (GalNAc...) threonine">
    <location>
        <position position="67"/>
    </location>
</feature>
<feature type="glycosylation site" description="N-linked (GlcNAc...) asparagine" evidence="2">
    <location>
        <position position="80"/>
    </location>
</feature>
<feature type="glycosylation site" description="N-linked (GlcNAc...) asparagine" evidence="2">
    <location>
        <position position="106"/>
    </location>
</feature>
<feature type="disulfide bond" evidence="1">
    <location>
        <begin position="35"/>
        <end position="59"/>
    </location>
</feature>
<feature type="disulfide bond" evidence="1">
    <location>
        <begin position="38"/>
        <end position="88"/>
    </location>
</feature>
<feature type="disulfide bond" evidence="1">
    <location>
        <begin position="56"/>
        <end position="110"/>
    </location>
</feature>
<feature type="disulfide bond" evidence="1">
    <location>
        <begin position="60"/>
        <end position="112"/>
    </location>
</feature>
<feature type="disulfide bond">
    <location>
        <begin position="87"/>
        <end position="115"/>
    </location>
</feature>
<feature type="sequence conflict" description="In Ref. 2; CAA24932." evidence="3" ref="2">
    <original>A</original>
    <variation>T</variation>
    <location>
        <position position="13"/>
    </location>
</feature>
<feature type="sequence conflict" description="In Ref. 4; AA sequence." evidence="3" ref="4">
    <original>E</original>
    <variation>Q</variation>
    <location>
        <position position="37"/>
    </location>
</feature>
<feature type="sequence conflict" description="In Ref. 2; CAA24932." evidence="3" ref="2">
    <original>P</original>
    <variation>A</variation>
    <location>
        <position position="52"/>
    </location>
</feature>
<feature type="sequence conflict" description="In Ref. 6; AA sequence." evidence="3" ref="6">
    <original>EATC</original>
    <variation>AZCT</variation>
    <location>
        <begin position="84"/>
        <end position="87"/>
    </location>
</feature>
<gene>
    <name type="primary">CGA</name>
</gene>
<proteinExistence type="evidence at protein level"/>
<dbReference type="EMBL" id="X00003">
    <property type="protein sequence ID" value="CAA24907.1"/>
    <property type="molecule type" value="Genomic_DNA"/>
</dbReference>
<dbReference type="EMBL" id="X00004">
    <property type="protein sequence ID" value="CAA24907.1"/>
    <property type="status" value="JOINED"/>
    <property type="molecule type" value="Genomic_DNA"/>
</dbReference>
<dbReference type="EMBL" id="X00050">
    <property type="protein sequence ID" value="CAA24932.1"/>
    <property type="molecule type" value="mRNA"/>
</dbReference>
<dbReference type="PIR" id="A93489">
    <property type="entry name" value="TTBOA"/>
</dbReference>
<dbReference type="RefSeq" id="NP_776326.1">
    <property type="nucleotide sequence ID" value="NM_173901.3"/>
</dbReference>
<dbReference type="SMR" id="P01217"/>
<dbReference type="FunCoup" id="P01217">
    <property type="interactions" value="274"/>
</dbReference>
<dbReference type="STRING" id="9913.ENSBTAP00000065256"/>
<dbReference type="GlyConnect" id="164">
    <property type="glycosylation" value="2 N-Linked glycans"/>
</dbReference>
<dbReference type="GlyConnect" id="193">
    <property type="glycosylation" value="1 O-Linked glycan (1 site)"/>
</dbReference>
<dbReference type="GlyConnect" id="349">
    <property type="glycosylation" value="6 N-Linked glycans"/>
</dbReference>
<dbReference type="GlyConnect" id="601">
    <property type="glycosylation" value="37 N-Linked glycans"/>
</dbReference>
<dbReference type="GlyCosmos" id="P01217">
    <property type="glycosylation" value="3 sites, 80 glycans"/>
</dbReference>
<dbReference type="GlyGen" id="P01217">
    <property type="glycosylation" value="4 sites, 76 N-linked glycans (1 site)"/>
</dbReference>
<dbReference type="iPTMnet" id="P01217"/>
<dbReference type="PaxDb" id="9913-ENSBTAP00000021481"/>
<dbReference type="Ensembl" id="ENSBTAT00000021481.5">
    <property type="protein sequence ID" value="ENSBTAP00000021481.4"/>
    <property type="gene ID" value="ENSBTAG00000016138.6"/>
</dbReference>
<dbReference type="GeneID" id="280749"/>
<dbReference type="KEGG" id="bta:280749"/>
<dbReference type="CTD" id="1081"/>
<dbReference type="VEuPathDB" id="HostDB:ENSBTAG00000016138"/>
<dbReference type="VGNC" id="VGNC:27257">
    <property type="gene designation" value="CGA"/>
</dbReference>
<dbReference type="eggNOG" id="ENOG502S1PK">
    <property type="taxonomic scope" value="Eukaryota"/>
</dbReference>
<dbReference type="GeneTree" id="ENSGT00390000012242"/>
<dbReference type="HOGENOM" id="CLU_148106_0_0_1"/>
<dbReference type="InParanoid" id="P01217"/>
<dbReference type="OMA" id="VKNHTDC"/>
<dbReference type="OrthoDB" id="9852859at2759"/>
<dbReference type="TreeFam" id="TF332733"/>
<dbReference type="Reactome" id="R-BTA-193048">
    <property type="pathway name" value="Androgen biosynthesis"/>
</dbReference>
<dbReference type="Reactome" id="R-BTA-193993">
    <property type="pathway name" value="Mineralocorticoid biosynthesis"/>
</dbReference>
<dbReference type="Reactome" id="R-BTA-209822">
    <property type="pathway name" value="Glycoprotein hormones"/>
</dbReference>
<dbReference type="Reactome" id="R-BTA-209968">
    <property type="pathway name" value="Thyroxine biosynthesis"/>
</dbReference>
<dbReference type="Reactome" id="R-BTA-375281">
    <property type="pathway name" value="Hormone ligand-binding receptors"/>
</dbReference>
<dbReference type="Reactome" id="R-BTA-418555">
    <property type="pathway name" value="G alpha (s) signalling events"/>
</dbReference>
<dbReference type="Reactome" id="R-BTA-8866910">
    <property type="pathway name" value="TFAP2 (AP-2) family regulates transcription of growth factors and their receptors"/>
</dbReference>
<dbReference type="Reactome" id="R-BTA-975578">
    <property type="pathway name" value="Reactions specific to the complex N-glycan synthesis pathway"/>
</dbReference>
<dbReference type="Proteomes" id="UP000009136">
    <property type="component" value="Chromosome 9"/>
</dbReference>
<dbReference type="Bgee" id="ENSBTAG00000016138">
    <property type="expression patterns" value="Expressed in adenohypophysis and 67 other cell types or tissues"/>
</dbReference>
<dbReference type="GO" id="GO:0005615">
    <property type="term" value="C:extracellular space"/>
    <property type="evidence" value="ECO:0000250"/>
    <property type="project" value="UniProtKB"/>
</dbReference>
<dbReference type="GO" id="GO:0016914">
    <property type="term" value="C:follicle-stimulating hormone complex"/>
    <property type="evidence" value="ECO:0000250"/>
    <property type="project" value="UniProtKB"/>
</dbReference>
<dbReference type="GO" id="GO:0016913">
    <property type="term" value="F:follicle-stimulating hormone activity"/>
    <property type="evidence" value="ECO:0000250"/>
    <property type="project" value="UniProtKB"/>
</dbReference>
<dbReference type="GO" id="GO:0007186">
    <property type="term" value="P:G protein-coupled receptor signaling pathway"/>
    <property type="evidence" value="ECO:0000250"/>
    <property type="project" value="UniProtKB"/>
</dbReference>
<dbReference type="GO" id="GO:0010893">
    <property type="term" value="P:positive regulation of steroid biosynthetic process"/>
    <property type="evidence" value="ECO:0000250"/>
    <property type="project" value="UniProtKB"/>
</dbReference>
<dbReference type="GO" id="GO:0010469">
    <property type="term" value="P:regulation of signaling receptor activity"/>
    <property type="evidence" value="ECO:0000250"/>
    <property type="project" value="UniProtKB"/>
</dbReference>
<dbReference type="GO" id="GO:0006590">
    <property type="term" value="P:thyroid hormone generation"/>
    <property type="evidence" value="ECO:0000318"/>
    <property type="project" value="GO_Central"/>
</dbReference>
<dbReference type="FunFam" id="2.10.90.10:FF:000011">
    <property type="entry name" value="Glycoprotein hormones alpha chain"/>
    <property type="match status" value="1"/>
</dbReference>
<dbReference type="Gene3D" id="2.10.90.10">
    <property type="entry name" value="Cystine-knot cytokines"/>
    <property type="match status" value="1"/>
</dbReference>
<dbReference type="InterPro" id="IPR029034">
    <property type="entry name" value="Cystine-knot_cytokine"/>
</dbReference>
<dbReference type="InterPro" id="IPR000476">
    <property type="entry name" value="Glyco_hormone"/>
</dbReference>
<dbReference type="PANTHER" id="PTHR11509">
    <property type="entry name" value="GLYCOPROTEIN HORMONE ALPHA CHAIN"/>
    <property type="match status" value="1"/>
</dbReference>
<dbReference type="PANTHER" id="PTHR11509:SF0">
    <property type="entry name" value="GLYCOPROTEIN HORMONES ALPHA CHAIN"/>
    <property type="match status" value="1"/>
</dbReference>
<dbReference type="Pfam" id="PF00236">
    <property type="entry name" value="Hormone_6"/>
    <property type="match status" value="1"/>
</dbReference>
<dbReference type="PRINTS" id="PR00274">
    <property type="entry name" value="GLYCOHORMONE"/>
</dbReference>
<dbReference type="SMART" id="SM00067">
    <property type="entry name" value="GHA"/>
    <property type="match status" value="1"/>
</dbReference>
<dbReference type="SUPFAM" id="SSF57501">
    <property type="entry name" value="Cystine-knot cytokines"/>
    <property type="match status" value="1"/>
</dbReference>
<dbReference type="PROSITE" id="PS00779">
    <property type="entry name" value="GLYCO_HORMONE_ALPHA_1"/>
    <property type="match status" value="1"/>
</dbReference>
<dbReference type="PROSITE" id="PS00780">
    <property type="entry name" value="GLYCO_HORMONE_ALPHA_2"/>
    <property type="match status" value="1"/>
</dbReference>
<dbReference type="PROSITE" id="PS50277">
    <property type="entry name" value="GLYCO_HORMONE_ALPHA_3"/>
    <property type="match status" value="1"/>
</dbReference>